<comment type="function">
    <text evidence="3 6 7">Glucose-responsive transcription factor that regulates expression of several glucose transporter (HXT) genes in response to glucose. In the absence of glucose, it functions as a transcriptional repressor, whereas high concentrations of glucose cause it to function as a transcriptional activator. In cells growing on low levels of glucose, has a neutral role, neither repressing nor activating transcription. Binds the consensus binding site sequence 5'-CGGANNA-3', of which multiple copies are present in all HXT promoters regulated by RGT1.</text>
</comment>
<comment type="subcellular location">
    <subcellularLocation>
        <location evidence="1 4">Nucleus</location>
    </subcellularLocation>
    <subcellularLocation>
        <location evidence="4">Cytoplasm</location>
    </subcellularLocation>
</comment>
<comment type="PTM">
    <text evidence="3">Glucose-induced phosphorylation regulates the DNA-binding activity. Hyperphosphorylation in cells growing on high levels of glucose does prevents DNA-binding and dephosphorylation restores DNA-binding ability.</text>
</comment>
<comment type="miscellaneous">
    <text evidence="5">Present with 195 molecules/cell in log phase SD medium.</text>
</comment>
<comment type="similarity">
    <text evidence="8">Belongs to the EDS1/RGT1 family.</text>
</comment>
<organism>
    <name type="scientific">Saccharomyces cerevisiae (strain ATCC 204508 / S288c)</name>
    <name type="common">Baker's yeast</name>
    <dbReference type="NCBI Taxonomy" id="559292"/>
    <lineage>
        <taxon>Eukaryota</taxon>
        <taxon>Fungi</taxon>
        <taxon>Dikarya</taxon>
        <taxon>Ascomycota</taxon>
        <taxon>Saccharomycotina</taxon>
        <taxon>Saccharomycetes</taxon>
        <taxon>Saccharomycetales</taxon>
        <taxon>Saccharomycetaceae</taxon>
        <taxon>Saccharomyces</taxon>
    </lineage>
</organism>
<accession>P32862</accession>
<accession>D6VXP8</accession>
<proteinExistence type="evidence at protein level"/>
<reference key="1">
    <citation type="journal article" date="1992" name="Yeast">
        <title>The sequence of a 12 kb fragment on the left arm of yeast chromosome XI reveals five new open reading frames, including a zinc finger protein and a homolog of the UDP-glucose pyrophosphorylase from potato.</title>
        <authorList>
            <person name="Purnelle B."/>
            <person name="Skala J."/>
            <person name="van Dyck L."/>
            <person name="Goffeau A."/>
        </authorList>
    </citation>
    <scope>NUCLEOTIDE SEQUENCE [GENOMIC DNA]</scope>
    <source>
        <strain>ATCC 204508 / S288c</strain>
    </source>
</reference>
<reference key="2">
    <citation type="journal article" date="1994" name="Nature">
        <title>Complete DNA sequence of yeast chromosome XI.</title>
        <authorList>
            <person name="Dujon B."/>
            <person name="Alexandraki D."/>
            <person name="Andre B."/>
            <person name="Ansorge W."/>
            <person name="Baladron V."/>
            <person name="Ballesta J.P.G."/>
            <person name="Banrevi A."/>
            <person name="Bolle P.-A."/>
            <person name="Bolotin-Fukuhara M."/>
            <person name="Bossier P."/>
            <person name="Bou G."/>
            <person name="Boyer J."/>
            <person name="Buitrago M.J."/>
            <person name="Cheret G."/>
            <person name="Colleaux L."/>
            <person name="Daignan-Fornier B."/>
            <person name="del Rey F."/>
            <person name="Dion C."/>
            <person name="Domdey H."/>
            <person name="Duesterhoeft A."/>
            <person name="Duesterhus S."/>
            <person name="Entian K.-D."/>
            <person name="Erfle H."/>
            <person name="Esteban P.F."/>
            <person name="Feldmann H."/>
            <person name="Fernandes L."/>
            <person name="Fobo G.M."/>
            <person name="Fritz C."/>
            <person name="Fukuhara H."/>
            <person name="Gabel C."/>
            <person name="Gaillon L."/>
            <person name="Garcia-Cantalejo J.M."/>
            <person name="Garcia-Ramirez J.J."/>
            <person name="Gent M.E."/>
            <person name="Ghazvini M."/>
            <person name="Goffeau A."/>
            <person name="Gonzalez A."/>
            <person name="Grothues D."/>
            <person name="Guerreiro P."/>
            <person name="Hegemann J.H."/>
            <person name="Hewitt N."/>
            <person name="Hilger F."/>
            <person name="Hollenberg C.P."/>
            <person name="Horaitis O."/>
            <person name="Indge K.J."/>
            <person name="Jacquier A."/>
            <person name="James C.M."/>
            <person name="Jauniaux J.-C."/>
            <person name="Jimenez A."/>
            <person name="Keuchel H."/>
            <person name="Kirchrath L."/>
            <person name="Kleine K."/>
            <person name="Koetter P."/>
            <person name="Legrain P."/>
            <person name="Liebl S."/>
            <person name="Louis E.J."/>
            <person name="Maia e Silva A."/>
            <person name="Marck C."/>
            <person name="Monnier A.-L."/>
            <person name="Moestl D."/>
            <person name="Mueller S."/>
            <person name="Obermaier B."/>
            <person name="Oliver S.G."/>
            <person name="Pallier C."/>
            <person name="Pascolo S."/>
            <person name="Pfeiffer F."/>
            <person name="Philippsen P."/>
            <person name="Planta R.J."/>
            <person name="Pohl F.M."/>
            <person name="Pohl T.M."/>
            <person name="Poehlmann R."/>
            <person name="Portetelle D."/>
            <person name="Purnelle B."/>
            <person name="Puzos V."/>
            <person name="Ramezani Rad M."/>
            <person name="Rasmussen S.W."/>
            <person name="Remacha M.A."/>
            <person name="Revuelta J.L."/>
            <person name="Richard G.-F."/>
            <person name="Rieger M."/>
            <person name="Rodrigues-Pousada C."/>
            <person name="Rose M."/>
            <person name="Rupp T."/>
            <person name="Santos M.A."/>
            <person name="Schwager C."/>
            <person name="Sensen C."/>
            <person name="Skala J."/>
            <person name="Soares H."/>
            <person name="Sor F."/>
            <person name="Stegemann J."/>
            <person name="Tettelin H."/>
            <person name="Thierry A."/>
            <person name="Tzermia M."/>
            <person name="Urrestarazu L.A."/>
            <person name="van Dyck L."/>
            <person name="van Vliet-Reedijk J.C."/>
            <person name="Valens M."/>
            <person name="Vandenbol M."/>
            <person name="Vilela C."/>
            <person name="Vissers S."/>
            <person name="von Wettstein D."/>
            <person name="Voss H."/>
            <person name="Wiemann S."/>
            <person name="Xu G."/>
            <person name="Zimmermann J."/>
            <person name="Haasemann M."/>
            <person name="Becker I."/>
            <person name="Mewes H.-W."/>
        </authorList>
    </citation>
    <scope>NUCLEOTIDE SEQUENCE [LARGE SCALE GENOMIC DNA]</scope>
    <source>
        <strain>ATCC 204508 / S288c</strain>
    </source>
</reference>
<reference key="3">
    <citation type="journal article" date="2014" name="G3 (Bethesda)">
        <title>The reference genome sequence of Saccharomyces cerevisiae: Then and now.</title>
        <authorList>
            <person name="Engel S.R."/>
            <person name="Dietrich F.S."/>
            <person name="Fisk D.G."/>
            <person name="Binkley G."/>
            <person name="Balakrishnan R."/>
            <person name="Costanzo M.C."/>
            <person name="Dwight S.S."/>
            <person name="Hitz B.C."/>
            <person name="Karra K."/>
            <person name="Nash R.S."/>
            <person name="Weng S."/>
            <person name="Wong E.D."/>
            <person name="Lloyd P."/>
            <person name="Skrzypek M.S."/>
            <person name="Miyasato S.R."/>
            <person name="Simison M."/>
            <person name="Cherry J.M."/>
        </authorList>
    </citation>
    <scope>GENOME REANNOTATION</scope>
    <source>
        <strain>ATCC 204508 / S288c</strain>
    </source>
</reference>
<reference key="4">
    <citation type="journal article" date="1991" name="Genetics">
        <title>Dominant and recessive suppressors that restore glucose transport in a yeast snf3 mutant.</title>
        <authorList>
            <person name="Marshall-Carlson L."/>
            <person name="Neigeborn L."/>
            <person name="Coons D."/>
            <person name="Bisson L."/>
            <person name="Carlson M."/>
        </authorList>
    </citation>
    <scope>FUNCTION</scope>
</reference>
<reference key="5">
    <citation type="journal article" date="1996" name="Mol. Cell. Biol.">
        <title>Rgt1p of Saccharomyces cerevisiae, a key regulator of glucose-induced genes, is both an activator and a repressor of transcription.</title>
        <authorList>
            <person name="Ozcan S."/>
            <person name="Leong T."/>
            <person name="Johnston M."/>
        </authorList>
    </citation>
    <scope>FUNCTION</scope>
    <scope>DNA-BINDING</scope>
</reference>
<reference key="6">
    <citation type="journal article" date="2003" name="Mol. Cell. Biol.">
        <title>Specificity and regulation of DNA binding by the yeast glucose transporter gene repressor Rgt1.</title>
        <authorList>
            <person name="Kim J.H."/>
            <person name="Polish J."/>
            <person name="Johnston M."/>
        </authorList>
    </citation>
    <scope>FUNCTION</scope>
    <scope>DNA-BINDING</scope>
    <scope>PHOSPHORYLATION</scope>
</reference>
<reference key="7">
    <citation type="journal article" date="2003" name="Nature">
        <title>Global analysis of protein localization in budding yeast.</title>
        <authorList>
            <person name="Huh W.-K."/>
            <person name="Falvo J.V."/>
            <person name="Gerke L.C."/>
            <person name="Carroll A.S."/>
            <person name="Howson R.W."/>
            <person name="Weissman J.S."/>
            <person name="O'Shea E.K."/>
        </authorList>
    </citation>
    <scope>SUBCELLULAR LOCATION [LARGE SCALE ANALYSIS]</scope>
</reference>
<reference key="8">
    <citation type="journal article" date="2003" name="Nature">
        <title>Global analysis of protein expression in yeast.</title>
        <authorList>
            <person name="Ghaemmaghami S."/>
            <person name="Huh W.-K."/>
            <person name="Bower K."/>
            <person name="Howson R.W."/>
            <person name="Belle A."/>
            <person name="Dephoure N."/>
            <person name="O'Shea E.K."/>
            <person name="Weissman J.S."/>
        </authorList>
    </citation>
    <scope>LEVEL OF PROTEIN EXPRESSION [LARGE SCALE ANALYSIS]</scope>
</reference>
<reference key="9">
    <citation type="journal article" date="2005" name="Mol. Cell. Proteomics">
        <title>Quantitative phosphoproteomics applied to the yeast pheromone signaling pathway.</title>
        <authorList>
            <person name="Gruhler A."/>
            <person name="Olsen J.V."/>
            <person name="Mohammed S."/>
            <person name="Mortensen P."/>
            <person name="Faergeman N.J."/>
            <person name="Mann M."/>
            <person name="Jensen O.N."/>
        </authorList>
    </citation>
    <scope>PHOSPHORYLATION [LARGE SCALE ANALYSIS] AT SER-202 AND SER-229</scope>
    <scope>IDENTIFICATION BY MASS SPECTROMETRY [LARGE SCALE ANALYSIS]</scope>
    <source>
        <strain>YAL6B</strain>
    </source>
</reference>
<reference key="10">
    <citation type="journal article" date="2007" name="J. Proteome Res.">
        <title>Large-scale phosphorylation analysis of alpha-factor-arrested Saccharomyces cerevisiae.</title>
        <authorList>
            <person name="Li X."/>
            <person name="Gerber S.A."/>
            <person name="Rudner A.D."/>
            <person name="Beausoleil S.A."/>
            <person name="Haas W."/>
            <person name="Villen J."/>
            <person name="Elias J.E."/>
            <person name="Gygi S.P."/>
        </authorList>
    </citation>
    <scope>PHOSPHORYLATION [LARGE SCALE ANALYSIS] AT SER-202</scope>
    <scope>IDENTIFICATION BY MASS SPECTROMETRY [LARGE SCALE ANALYSIS]</scope>
    <source>
        <strain>ADR376</strain>
    </source>
</reference>
<reference key="11">
    <citation type="journal article" date="2008" name="Mol. Cell. Proteomics">
        <title>A multidimensional chromatography technology for in-depth phosphoproteome analysis.</title>
        <authorList>
            <person name="Albuquerque C.P."/>
            <person name="Smolka M.B."/>
            <person name="Payne S.H."/>
            <person name="Bafna V."/>
            <person name="Eng J."/>
            <person name="Zhou H."/>
        </authorList>
    </citation>
    <scope>PHOSPHORYLATION [LARGE SCALE ANALYSIS] AT SER-202; SER-229 AND SER-410</scope>
    <scope>IDENTIFICATION BY MASS SPECTROMETRY [LARGE SCALE ANALYSIS]</scope>
</reference>
<reference key="12">
    <citation type="journal article" date="2009" name="Science">
        <title>Global analysis of Cdk1 substrate phosphorylation sites provides insights into evolution.</title>
        <authorList>
            <person name="Holt L.J."/>
            <person name="Tuch B.B."/>
            <person name="Villen J."/>
            <person name="Johnson A.D."/>
            <person name="Gygi S.P."/>
            <person name="Morgan D.O."/>
        </authorList>
    </citation>
    <scope>PHOSPHORYLATION [LARGE SCALE ANALYSIS] AT SER-202; SER-205; SER-208; SER-229; SER-283; SER-284; SER-410; SER-414 AND SER-1130</scope>
    <scope>IDENTIFICATION BY MASS SPECTROMETRY [LARGE SCALE ANALYSIS]</scope>
</reference>
<name>RGT1_YEAST</name>
<feature type="chain" id="PRO_0000115001" description="Glucose transport transcription regulator RGT1">
    <location>
        <begin position="1"/>
        <end position="1170"/>
    </location>
</feature>
<feature type="DNA-binding region" description="Zn(2)-C6 fungal-type" evidence="1">
    <location>
        <begin position="47"/>
        <end position="76"/>
    </location>
</feature>
<feature type="region of interest" description="Disordered" evidence="2">
    <location>
        <begin position="1"/>
        <end position="46"/>
    </location>
</feature>
<feature type="region of interest" description="Disordered" evidence="2">
    <location>
        <begin position="77"/>
        <end position="149"/>
    </location>
</feature>
<feature type="region of interest" description="Disordered" evidence="2">
    <location>
        <begin position="226"/>
        <end position="254"/>
    </location>
</feature>
<feature type="region of interest" description="Disordered" evidence="2">
    <location>
        <begin position="269"/>
        <end position="288"/>
    </location>
</feature>
<feature type="region of interest" description="Disordered" evidence="2">
    <location>
        <begin position="293"/>
        <end position="323"/>
    </location>
</feature>
<feature type="region of interest" description="Disordered" evidence="2">
    <location>
        <begin position="384"/>
        <end position="506"/>
    </location>
</feature>
<feature type="region of interest" description="Disordered" evidence="2">
    <location>
        <begin position="944"/>
        <end position="977"/>
    </location>
</feature>
<feature type="compositionally biased region" description="Polar residues" evidence="2">
    <location>
        <begin position="1"/>
        <end position="22"/>
    </location>
</feature>
<feature type="compositionally biased region" description="Basic and acidic residues" evidence="2">
    <location>
        <begin position="99"/>
        <end position="108"/>
    </location>
</feature>
<feature type="compositionally biased region" description="Low complexity" evidence="2">
    <location>
        <begin position="113"/>
        <end position="138"/>
    </location>
</feature>
<feature type="compositionally biased region" description="Polar residues" evidence="2">
    <location>
        <begin position="139"/>
        <end position="149"/>
    </location>
</feature>
<feature type="compositionally biased region" description="Low complexity" evidence="2">
    <location>
        <begin position="239"/>
        <end position="250"/>
    </location>
</feature>
<feature type="compositionally biased region" description="Basic and acidic residues" evidence="2">
    <location>
        <begin position="271"/>
        <end position="280"/>
    </location>
</feature>
<feature type="compositionally biased region" description="Low complexity" evidence="2">
    <location>
        <begin position="293"/>
        <end position="302"/>
    </location>
</feature>
<feature type="compositionally biased region" description="Low complexity" evidence="2">
    <location>
        <begin position="309"/>
        <end position="323"/>
    </location>
</feature>
<feature type="compositionally biased region" description="Low complexity" evidence="2">
    <location>
        <begin position="385"/>
        <end position="397"/>
    </location>
</feature>
<feature type="compositionally biased region" description="Polar residues" evidence="2">
    <location>
        <begin position="411"/>
        <end position="422"/>
    </location>
</feature>
<feature type="compositionally biased region" description="Low complexity" evidence="2">
    <location>
        <begin position="424"/>
        <end position="444"/>
    </location>
</feature>
<feature type="compositionally biased region" description="Polar residues" evidence="2">
    <location>
        <begin position="445"/>
        <end position="457"/>
    </location>
</feature>
<feature type="compositionally biased region" description="Basic residues" evidence="2">
    <location>
        <begin position="473"/>
        <end position="488"/>
    </location>
</feature>
<feature type="compositionally biased region" description="Polar residues" evidence="2">
    <location>
        <begin position="493"/>
        <end position="506"/>
    </location>
</feature>
<feature type="modified residue" description="Phosphoserine" evidence="9 10 11 12">
    <location>
        <position position="202"/>
    </location>
</feature>
<feature type="modified residue" description="Phosphoserine" evidence="12">
    <location>
        <position position="205"/>
    </location>
</feature>
<feature type="modified residue" description="Phosphoserine" evidence="12">
    <location>
        <position position="208"/>
    </location>
</feature>
<feature type="modified residue" description="Phosphoserine" evidence="9 11 12">
    <location>
        <position position="229"/>
    </location>
</feature>
<feature type="modified residue" description="Phosphoserine" evidence="12">
    <location>
        <position position="283"/>
    </location>
</feature>
<feature type="modified residue" description="Phosphoserine" evidence="12">
    <location>
        <position position="284"/>
    </location>
</feature>
<feature type="modified residue" description="Phosphoserine" evidence="11 12">
    <location>
        <position position="410"/>
    </location>
</feature>
<feature type="modified residue" description="Phosphoserine" evidence="12">
    <location>
        <position position="414"/>
    </location>
</feature>
<feature type="modified residue" description="Phosphoserine" evidence="12">
    <location>
        <position position="1130"/>
    </location>
</feature>
<evidence type="ECO:0000255" key="1">
    <source>
        <dbReference type="PROSITE-ProRule" id="PRU00227"/>
    </source>
</evidence>
<evidence type="ECO:0000256" key="2">
    <source>
        <dbReference type="SAM" id="MobiDB-lite"/>
    </source>
</evidence>
<evidence type="ECO:0000269" key="3">
    <source>
    </source>
</evidence>
<evidence type="ECO:0000269" key="4">
    <source>
    </source>
</evidence>
<evidence type="ECO:0000269" key="5">
    <source>
    </source>
</evidence>
<evidence type="ECO:0000269" key="6">
    <source>
    </source>
</evidence>
<evidence type="ECO:0000269" key="7">
    <source>
    </source>
</evidence>
<evidence type="ECO:0000305" key="8"/>
<evidence type="ECO:0007744" key="9">
    <source>
    </source>
</evidence>
<evidence type="ECO:0007744" key="10">
    <source>
    </source>
</evidence>
<evidence type="ECO:0007744" key="11">
    <source>
    </source>
</evidence>
<evidence type="ECO:0007744" key="12">
    <source>
    </source>
</evidence>
<dbReference type="EMBL" id="X69584">
    <property type="protein sequence ID" value="CAA49301.1"/>
    <property type="molecule type" value="Genomic_DNA"/>
</dbReference>
<dbReference type="EMBL" id="Z28038">
    <property type="protein sequence ID" value="CAA81873.1"/>
    <property type="molecule type" value="Genomic_DNA"/>
</dbReference>
<dbReference type="EMBL" id="BK006944">
    <property type="protein sequence ID" value="DAA09118.1"/>
    <property type="molecule type" value="Genomic_DNA"/>
</dbReference>
<dbReference type="PIR" id="S30010">
    <property type="entry name" value="S30010"/>
</dbReference>
<dbReference type="RefSeq" id="NP_012886.3">
    <property type="nucleotide sequence ID" value="NM_001179604.3"/>
</dbReference>
<dbReference type="BioGRID" id="34094">
    <property type="interactions" value="132"/>
</dbReference>
<dbReference type="DIP" id="DIP-4177N"/>
<dbReference type="FunCoup" id="P32862">
    <property type="interactions" value="509"/>
</dbReference>
<dbReference type="IntAct" id="P32862">
    <property type="interactions" value="7"/>
</dbReference>
<dbReference type="STRING" id="4932.YKL038W"/>
<dbReference type="GlyGen" id="P32862">
    <property type="glycosylation" value="3 sites, 1 O-linked glycan (2 sites)"/>
</dbReference>
<dbReference type="iPTMnet" id="P32862"/>
<dbReference type="PaxDb" id="4932-YKL038W"/>
<dbReference type="PeptideAtlas" id="P32862"/>
<dbReference type="EnsemblFungi" id="YKL038W_mRNA">
    <property type="protein sequence ID" value="YKL038W"/>
    <property type="gene ID" value="YKL038W"/>
</dbReference>
<dbReference type="GeneID" id="853828"/>
<dbReference type="KEGG" id="sce:YKL038W"/>
<dbReference type="AGR" id="SGD:S000001521"/>
<dbReference type="SGD" id="S000001521">
    <property type="gene designation" value="RGT1"/>
</dbReference>
<dbReference type="VEuPathDB" id="FungiDB:YKL038W"/>
<dbReference type="eggNOG" id="ENOG502QRVJ">
    <property type="taxonomic scope" value="Eukaryota"/>
</dbReference>
<dbReference type="GeneTree" id="ENSGT00940000176717"/>
<dbReference type="HOGENOM" id="CLU_006525_0_0_1"/>
<dbReference type="InParanoid" id="P32862"/>
<dbReference type="OMA" id="WFRNSLE"/>
<dbReference type="OrthoDB" id="5426978at2759"/>
<dbReference type="BioCyc" id="YEAST:G3O-31839-MONOMER"/>
<dbReference type="BioGRID-ORCS" id="853828">
    <property type="hits" value="3 hits in 13 CRISPR screens"/>
</dbReference>
<dbReference type="PRO" id="PR:P32862"/>
<dbReference type="Proteomes" id="UP000002311">
    <property type="component" value="Chromosome XI"/>
</dbReference>
<dbReference type="RNAct" id="P32862">
    <property type="molecule type" value="protein"/>
</dbReference>
<dbReference type="GO" id="GO:0005737">
    <property type="term" value="C:cytoplasm"/>
    <property type="evidence" value="ECO:0007669"/>
    <property type="project" value="UniProtKB-SubCell"/>
</dbReference>
<dbReference type="GO" id="GO:0005634">
    <property type="term" value="C:nucleus"/>
    <property type="evidence" value="ECO:0000314"/>
    <property type="project" value="SGD"/>
</dbReference>
<dbReference type="GO" id="GO:0003677">
    <property type="term" value="F:DNA binding"/>
    <property type="evidence" value="ECO:0000314"/>
    <property type="project" value="SGD"/>
</dbReference>
<dbReference type="GO" id="GO:0001228">
    <property type="term" value="F:DNA-binding transcription activator activity, RNA polymerase II-specific"/>
    <property type="evidence" value="ECO:0000314"/>
    <property type="project" value="SGD"/>
</dbReference>
<dbReference type="GO" id="GO:0001227">
    <property type="term" value="F:DNA-binding transcription repressor activity, RNA polymerase II-specific"/>
    <property type="evidence" value="ECO:0000314"/>
    <property type="project" value="CACAO"/>
</dbReference>
<dbReference type="GO" id="GO:0000978">
    <property type="term" value="F:RNA polymerase II cis-regulatory region sequence-specific DNA binding"/>
    <property type="evidence" value="ECO:0000314"/>
    <property type="project" value="SGD"/>
</dbReference>
<dbReference type="GO" id="GO:0008270">
    <property type="term" value="F:zinc ion binding"/>
    <property type="evidence" value="ECO:0007669"/>
    <property type="project" value="InterPro"/>
</dbReference>
<dbReference type="GO" id="GO:0006006">
    <property type="term" value="P:glucose metabolic process"/>
    <property type="evidence" value="ECO:0000316"/>
    <property type="project" value="SGD"/>
</dbReference>
<dbReference type="GO" id="GO:0000122">
    <property type="term" value="P:negative regulation of transcription by RNA polymerase II"/>
    <property type="evidence" value="ECO:0000314"/>
    <property type="project" value="SGD"/>
</dbReference>
<dbReference type="GO" id="GO:0045944">
    <property type="term" value="P:positive regulation of transcription by RNA polymerase II"/>
    <property type="evidence" value="ECO:0000314"/>
    <property type="project" value="SGD"/>
</dbReference>
<dbReference type="CDD" id="cd00067">
    <property type="entry name" value="GAL4"/>
    <property type="match status" value="1"/>
</dbReference>
<dbReference type="Gene3D" id="4.10.240.10">
    <property type="entry name" value="Zn(2)-C6 fungal-type DNA-binding domain"/>
    <property type="match status" value="1"/>
</dbReference>
<dbReference type="InterPro" id="IPR050797">
    <property type="entry name" value="Carb_Metab_Trans_Reg"/>
</dbReference>
<dbReference type="InterPro" id="IPR036864">
    <property type="entry name" value="Zn2-C6_fun-type_DNA-bd_sf"/>
</dbReference>
<dbReference type="InterPro" id="IPR001138">
    <property type="entry name" value="Zn2Cys6_DnaBD"/>
</dbReference>
<dbReference type="PANTHER" id="PTHR31668:SF26">
    <property type="entry name" value="GLUCOSE TRANSPORT TRANSCRIPTION REGULATOR RGT1-RELATED"/>
    <property type="match status" value="1"/>
</dbReference>
<dbReference type="PANTHER" id="PTHR31668">
    <property type="entry name" value="GLUCOSE TRANSPORT TRANSCRIPTION REGULATOR RGT1-RELATED-RELATED"/>
    <property type="match status" value="1"/>
</dbReference>
<dbReference type="Pfam" id="PF00172">
    <property type="entry name" value="Zn_clus"/>
    <property type="match status" value="1"/>
</dbReference>
<dbReference type="SMART" id="SM00066">
    <property type="entry name" value="GAL4"/>
    <property type="match status" value="1"/>
</dbReference>
<dbReference type="SUPFAM" id="SSF57701">
    <property type="entry name" value="Zn2/Cys6 DNA-binding domain"/>
    <property type="match status" value="1"/>
</dbReference>
<dbReference type="PROSITE" id="PS00463">
    <property type="entry name" value="ZN2_CY6_FUNGAL_1"/>
    <property type="match status" value="1"/>
</dbReference>
<dbReference type="PROSITE" id="PS50048">
    <property type="entry name" value="ZN2_CY6_FUNGAL_2"/>
    <property type="match status" value="1"/>
</dbReference>
<protein>
    <recommendedName>
        <fullName>Glucose transport transcription regulator RGT1</fullName>
    </recommendedName>
    <alternativeName>
        <fullName>Restores glucose transport protein 1</fullName>
    </alternativeName>
</protein>
<sequence length="1170" mass="128240">MNELNTVSTNSSDSTKNGGTSNSPDDMDSAAAASHAIKKRTKASRACDQCRKKKIKCDYKDEKGVCSNCQRNGDRCSFDRVPLKRGPSKGYTRSTSHPRTNEIQDHNNSRSYNTFDNSNNTLNNNTGNSGDNGINSNTVPSTPSRSNSVLLPPLTQYIPQAGGIPPSFQNPAIQSTMPAGNIGQQQFWKVPYHEFQHQRKGSIDSLQSDISVRTLNPNEQLSYNTVQQSPITNKHTNDSGNANGSVTGSGSASGSGGYWSFIRTSGLLAPTDDHNGEQTRRSSSIPSLLRNTSNSLLLGGQPQLPPPQQQSQPQAHQQKLQQGQNLYSYSQFSQQQPYNPSISSFGQFAANGFHSRQGSVASEAMSPSAPAMFTSTSTNPVNVAQQTQRPQGQQVPQFSSELDGNKRRQSAPVSVTLSTDRLNGNENNNGEINNNNGSNNSGSSKDTSQHSQESVTTPAALEASSPGSTPQRSTKKRRKSYVSKKTKPKRDSSISITSKDSAHPMTTSSTIAYGQISDVDLIDTYYEFIHVGFPIIPLNKTTLTSDLLLVNTQPISNIHEVNSYVILWFRNSLELLVRVALKQKPGGKFFDNIVGVALSPSNDNNKAGFTTATARDDAEKTRRDSHNEVQDTLEVQSVFIAALNECFQKIVDIHPKFRENNDQISPKIKVIYLSTFILLNYILAFVGYDNSFVLGMSVTIFNEFKLYKLLLFPEPDINDVKPPVDEEVSTGNGNTKTSEFEIGSESAGHMNPSNSPNSMDENISHYSVLFKRLYVLLSVFDSLQSCAFGGPKLLNISIQGSTERFFSNDLGSKWCLEQSQLRLKSVLQSLKLGELMSELTRNRISMNGNRKPGFDITNSSSLLSEYVETQPLSVAQLFCKLLIGKHNFINCLLSLYDSEAGVYSDLTLDLSSKIADSLCSLISIILQVLTLILRLNPTNSIDFNYRPPNPPANNPTVQEGPSAMGSSPVAGNLSAAPPSEGNPDFYKKLLGLKQDTGTILSDLCRGIISPFAIAILHEVYNITELVKQMPTSLISIMMTATTTQNTQDTKKSQDLVMKLSNSMNEVVQITSVLTMIKPFKIFEHELNKPIMSLTGGLSSTTRNDVMWPKSGQGLRESSVMKTLLDERRTSGTQPTTAPVAAEEPRLENVALENFVSIGWKLLDDSELGWY</sequence>
<gene>
    <name type="primary">RGT1</name>
    <name type="ordered locus">YKL038W</name>
    <name type="ORF">YKL251</name>
</gene>
<keyword id="KW-0010">Activator</keyword>
<keyword id="KW-0963">Cytoplasm</keyword>
<keyword id="KW-0238">DNA-binding</keyword>
<keyword id="KW-0479">Metal-binding</keyword>
<keyword id="KW-0539">Nucleus</keyword>
<keyword id="KW-0597">Phosphoprotein</keyword>
<keyword id="KW-1185">Reference proteome</keyword>
<keyword id="KW-0678">Repressor</keyword>
<keyword id="KW-0804">Transcription</keyword>
<keyword id="KW-0805">Transcription regulation</keyword>
<keyword id="KW-0862">Zinc</keyword>